<keyword id="KW-0285">Flavoprotein</keyword>
<keyword id="KW-0288">FMN</keyword>
<keyword id="KW-0560">Oxidoreductase</keyword>
<keyword id="KW-1185">Reference proteome</keyword>
<accession>Q54E41</accession>
<comment type="function">
    <text evidence="1">Catalyzes the oxidation of glycolate to glyoxylate, with a reduction of O2 to H2O2. May use other 2-hydroxyacids as substrates.</text>
</comment>
<comment type="catalytic activity">
    <reaction evidence="1">
        <text>glycolate + O2 = glyoxylate + H2O2</text>
        <dbReference type="Rhea" id="RHEA:25311"/>
        <dbReference type="ChEBI" id="CHEBI:15379"/>
        <dbReference type="ChEBI" id="CHEBI:16240"/>
        <dbReference type="ChEBI" id="CHEBI:29805"/>
        <dbReference type="ChEBI" id="CHEBI:36655"/>
        <dbReference type="EC" id="1.1.3.15"/>
    </reaction>
    <physiologicalReaction direction="left-to-right" evidence="1">
        <dbReference type="Rhea" id="RHEA:25312"/>
    </physiologicalReaction>
</comment>
<comment type="catalytic activity">
    <reaction evidence="1">
        <text>a (2S)-2-hydroxycarboxylate + O2 = a 2-oxocarboxylate + H2O2</text>
        <dbReference type="Rhea" id="RHEA:16789"/>
        <dbReference type="ChEBI" id="CHEBI:15379"/>
        <dbReference type="ChEBI" id="CHEBI:16240"/>
        <dbReference type="ChEBI" id="CHEBI:35179"/>
        <dbReference type="ChEBI" id="CHEBI:58123"/>
        <dbReference type="EC" id="1.1.3.15"/>
    </reaction>
    <physiologicalReaction direction="left-to-right" evidence="1">
        <dbReference type="Rhea" id="RHEA:16790"/>
    </physiologicalReaction>
</comment>
<comment type="cofactor">
    <cofactor evidence="1">
        <name>FMN</name>
        <dbReference type="ChEBI" id="CHEBI:58210"/>
    </cofactor>
    <text evidence="1">Binds 1 FMN per subunit.</text>
</comment>
<comment type="subunit">
    <text evidence="1">Homotetramer.</text>
</comment>
<comment type="similarity">
    <text evidence="3">Belongs to the FMN-dependent alpha-hydroxy acid dehydrogenase family.</text>
</comment>
<sequence length="388" mass="42877">MENQFKNNNNSSSIETSNQFSNKKTNRLDSFVSVSELHEEAKRLLPKMAYDYYASGSNDQITLAENENAFSRIKLVPRSLVDVSKVNTKTRIFGRDISTPILIAPWAMQRMASQRGELDTVEASKEFNTIMTLSSLSTTSVEDLSSATNGNPGWFQLYVFKDRKVSEELVKRAESIGYSALVLTVDTPFLGKRTADFKNSFKLPNGLSLKIFEKLMLSNLDGGLNQYIATMIDPSLTWNDLKWLKSITKLPILVKGIMCPKDAELALQYGADGIIVSNHGGRQLDTCPSTIEVLPYISKVVRGRVPLILDGGIRRGTDVLKALAFGANAVCIGRPIIWGLSTGGKDGVLKVLNLLNSELQLAMALTGITNISDINNSIIWDQNKYIKL</sequence>
<proteinExistence type="inferred from homology"/>
<dbReference type="EC" id="1.1.3.15" evidence="1"/>
<dbReference type="EMBL" id="AAFI02000185">
    <property type="protein sequence ID" value="EAL61528.1"/>
    <property type="molecule type" value="Genomic_DNA"/>
</dbReference>
<dbReference type="SMR" id="Q54E41"/>
<dbReference type="FunCoup" id="Q54E41">
    <property type="interactions" value="174"/>
</dbReference>
<dbReference type="STRING" id="44689.Q54E41"/>
<dbReference type="PaxDb" id="44689-DDB0267054"/>
<dbReference type="EnsemblProtists" id="EAL61528">
    <property type="protein sequence ID" value="EAL61528"/>
    <property type="gene ID" value="DDB_G0291814"/>
</dbReference>
<dbReference type="KEGG" id="ddi:DDB_G0291814"/>
<dbReference type="dictyBase" id="DDB_G0291814">
    <property type="gene designation" value="hao"/>
</dbReference>
<dbReference type="VEuPathDB" id="AmoebaDB:DDB_G0291814"/>
<dbReference type="eggNOG" id="KOG0538">
    <property type="taxonomic scope" value="Eukaryota"/>
</dbReference>
<dbReference type="HOGENOM" id="CLU_020639_6_1_1"/>
<dbReference type="InParanoid" id="Q54E41"/>
<dbReference type="OMA" id="RIWFRPK"/>
<dbReference type="PhylomeDB" id="Q54E41"/>
<dbReference type="Reactome" id="R-DDI-389661">
    <property type="pathway name" value="Glyoxylate metabolism and glycine degradation"/>
</dbReference>
<dbReference type="Reactome" id="R-DDI-390918">
    <property type="pathway name" value="Peroxisomal lipid metabolism"/>
</dbReference>
<dbReference type="Reactome" id="R-DDI-9033241">
    <property type="pathway name" value="Peroxisomal protein import"/>
</dbReference>
<dbReference type="PRO" id="PR:Q54E41"/>
<dbReference type="Proteomes" id="UP000002195">
    <property type="component" value="Chromosome 6"/>
</dbReference>
<dbReference type="GO" id="GO:0003973">
    <property type="term" value="F:(S)-2-hydroxy-acid oxidase activity"/>
    <property type="evidence" value="ECO:0007669"/>
    <property type="project" value="UniProtKB-EC"/>
</dbReference>
<dbReference type="GO" id="GO:0010181">
    <property type="term" value="F:FMN binding"/>
    <property type="evidence" value="ECO:0007669"/>
    <property type="project" value="InterPro"/>
</dbReference>
<dbReference type="CDD" id="cd02809">
    <property type="entry name" value="alpha_hydroxyacid_oxid_FMN"/>
    <property type="match status" value="1"/>
</dbReference>
<dbReference type="FunFam" id="3.20.20.70:FF:000029">
    <property type="entry name" value="L-lactate dehydrogenase"/>
    <property type="match status" value="1"/>
</dbReference>
<dbReference type="Gene3D" id="3.20.20.70">
    <property type="entry name" value="Aldolase class I"/>
    <property type="match status" value="1"/>
</dbReference>
<dbReference type="InterPro" id="IPR013785">
    <property type="entry name" value="Aldolase_TIM"/>
</dbReference>
<dbReference type="InterPro" id="IPR012133">
    <property type="entry name" value="Alpha-hydoxy_acid_DH_FMN"/>
</dbReference>
<dbReference type="InterPro" id="IPR000262">
    <property type="entry name" value="FMN-dep_DH"/>
</dbReference>
<dbReference type="InterPro" id="IPR037396">
    <property type="entry name" value="FMN_HAD"/>
</dbReference>
<dbReference type="InterPro" id="IPR008259">
    <property type="entry name" value="FMN_hydac_DH_AS"/>
</dbReference>
<dbReference type="PANTHER" id="PTHR10578:SF107">
    <property type="entry name" value="2-HYDROXYACID OXIDASE 1"/>
    <property type="match status" value="1"/>
</dbReference>
<dbReference type="PANTHER" id="PTHR10578">
    <property type="entry name" value="S -2-HYDROXY-ACID OXIDASE-RELATED"/>
    <property type="match status" value="1"/>
</dbReference>
<dbReference type="Pfam" id="PF01070">
    <property type="entry name" value="FMN_dh"/>
    <property type="match status" value="1"/>
</dbReference>
<dbReference type="PIRSF" id="PIRSF000138">
    <property type="entry name" value="Al-hdrx_acd_dh"/>
    <property type="match status" value="1"/>
</dbReference>
<dbReference type="SUPFAM" id="SSF51395">
    <property type="entry name" value="FMN-linked oxidoreductases"/>
    <property type="match status" value="1"/>
</dbReference>
<dbReference type="PROSITE" id="PS00557">
    <property type="entry name" value="FMN_HYDROXY_ACID_DH_1"/>
    <property type="match status" value="1"/>
</dbReference>
<dbReference type="PROSITE" id="PS51349">
    <property type="entry name" value="FMN_HYDROXY_ACID_DH_2"/>
    <property type="match status" value="1"/>
</dbReference>
<evidence type="ECO:0000250" key="1">
    <source>
        <dbReference type="UniProtKB" id="P05414"/>
    </source>
</evidence>
<evidence type="ECO:0000250" key="2">
    <source>
        <dbReference type="UniProtKB" id="Q9UJM8"/>
    </source>
</evidence>
<evidence type="ECO:0000255" key="3">
    <source>
        <dbReference type="PROSITE-ProRule" id="PRU00683"/>
    </source>
</evidence>
<evidence type="ECO:0000256" key="4">
    <source>
        <dbReference type="SAM" id="MobiDB-lite"/>
    </source>
</evidence>
<reference key="1">
    <citation type="journal article" date="2005" name="Nature">
        <title>The genome of the social amoeba Dictyostelium discoideum.</title>
        <authorList>
            <person name="Eichinger L."/>
            <person name="Pachebat J.A."/>
            <person name="Gloeckner G."/>
            <person name="Rajandream M.A."/>
            <person name="Sucgang R."/>
            <person name="Berriman M."/>
            <person name="Song J."/>
            <person name="Olsen R."/>
            <person name="Szafranski K."/>
            <person name="Xu Q."/>
            <person name="Tunggal B."/>
            <person name="Kummerfeld S."/>
            <person name="Madera M."/>
            <person name="Konfortov B.A."/>
            <person name="Rivero F."/>
            <person name="Bankier A.T."/>
            <person name="Lehmann R."/>
            <person name="Hamlin N."/>
            <person name="Davies R."/>
            <person name="Gaudet P."/>
            <person name="Fey P."/>
            <person name="Pilcher K."/>
            <person name="Chen G."/>
            <person name="Saunders D."/>
            <person name="Sodergren E.J."/>
            <person name="Davis P."/>
            <person name="Kerhornou A."/>
            <person name="Nie X."/>
            <person name="Hall N."/>
            <person name="Anjard C."/>
            <person name="Hemphill L."/>
            <person name="Bason N."/>
            <person name="Farbrother P."/>
            <person name="Desany B."/>
            <person name="Just E."/>
            <person name="Morio T."/>
            <person name="Rost R."/>
            <person name="Churcher C.M."/>
            <person name="Cooper J."/>
            <person name="Haydock S."/>
            <person name="van Driessche N."/>
            <person name="Cronin A."/>
            <person name="Goodhead I."/>
            <person name="Muzny D.M."/>
            <person name="Mourier T."/>
            <person name="Pain A."/>
            <person name="Lu M."/>
            <person name="Harper D."/>
            <person name="Lindsay R."/>
            <person name="Hauser H."/>
            <person name="James K.D."/>
            <person name="Quiles M."/>
            <person name="Madan Babu M."/>
            <person name="Saito T."/>
            <person name="Buchrieser C."/>
            <person name="Wardroper A."/>
            <person name="Felder M."/>
            <person name="Thangavelu M."/>
            <person name="Johnson D."/>
            <person name="Knights A."/>
            <person name="Loulseged H."/>
            <person name="Mungall K.L."/>
            <person name="Oliver K."/>
            <person name="Price C."/>
            <person name="Quail M.A."/>
            <person name="Urushihara H."/>
            <person name="Hernandez J."/>
            <person name="Rabbinowitsch E."/>
            <person name="Steffen D."/>
            <person name="Sanders M."/>
            <person name="Ma J."/>
            <person name="Kohara Y."/>
            <person name="Sharp S."/>
            <person name="Simmonds M.N."/>
            <person name="Spiegler S."/>
            <person name="Tivey A."/>
            <person name="Sugano S."/>
            <person name="White B."/>
            <person name="Walker D."/>
            <person name="Woodward J.R."/>
            <person name="Winckler T."/>
            <person name="Tanaka Y."/>
            <person name="Shaulsky G."/>
            <person name="Schleicher M."/>
            <person name="Weinstock G.M."/>
            <person name="Rosenthal A."/>
            <person name="Cox E.C."/>
            <person name="Chisholm R.L."/>
            <person name="Gibbs R.A."/>
            <person name="Loomis W.F."/>
            <person name="Platzer M."/>
            <person name="Kay R.R."/>
            <person name="Williams J.G."/>
            <person name="Dear P.H."/>
            <person name="Noegel A.A."/>
            <person name="Barrell B.G."/>
            <person name="Kuspa A."/>
        </authorList>
    </citation>
    <scope>NUCLEOTIDE SEQUENCE [LARGE SCALE GENOMIC DNA]</scope>
    <source>
        <strain>AX4</strain>
    </source>
</reference>
<organism>
    <name type="scientific">Dictyostelium discoideum</name>
    <name type="common">Social amoeba</name>
    <dbReference type="NCBI Taxonomy" id="44689"/>
    <lineage>
        <taxon>Eukaryota</taxon>
        <taxon>Amoebozoa</taxon>
        <taxon>Evosea</taxon>
        <taxon>Eumycetozoa</taxon>
        <taxon>Dictyostelia</taxon>
        <taxon>Dictyosteliales</taxon>
        <taxon>Dictyosteliaceae</taxon>
        <taxon>Dictyostelium</taxon>
    </lineage>
</organism>
<name>HAOX_DICDI</name>
<protein>
    <recommendedName>
        <fullName>2-Hydroxyacid oxidase</fullName>
        <shortName>HAOX</shortName>
        <ecNumber evidence="1">1.1.3.15</ecNumber>
    </recommendedName>
    <alternativeName>
        <fullName>Glycolate oxidase</fullName>
        <shortName>GOX</shortName>
    </alternativeName>
</protein>
<gene>
    <name type="primary">haox</name>
    <name type="ORF">DDB_G0291814</name>
</gene>
<feature type="chain" id="PRO_0000328260" description="2-Hydroxyacid oxidase">
    <location>
        <begin position="1"/>
        <end position="388"/>
    </location>
</feature>
<feature type="domain" description="FMN hydroxy acid dehydrogenase" evidence="3">
    <location>
        <begin position="26"/>
        <end position="384"/>
    </location>
</feature>
<feature type="region of interest" description="Disordered" evidence="4">
    <location>
        <begin position="1"/>
        <end position="21"/>
    </location>
</feature>
<feature type="active site" description="Proton acceptor" evidence="1">
    <location>
        <position position="279"/>
    </location>
</feature>
<feature type="binding site" evidence="2">
    <location>
        <position position="52"/>
    </location>
    <ligand>
        <name>glyoxylate</name>
        <dbReference type="ChEBI" id="CHEBI:36655"/>
    </ligand>
</feature>
<feature type="binding site" evidence="1">
    <location>
        <begin position="105"/>
        <end position="107"/>
    </location>
    <ligand>
        <name>FMN</name>
        <dbReference type="ChEBI" id="CHEBI:58210"/>
    </ligand>
</feature>
<feature type="binding site" evidence="1">
    <location>
        <position position="134"/>
    </location>
    <ligand>
        <name>FMN</name>
        <dbReference type="ChEBI" id="CHEBI:58210"/>
    </ligand>
</feature>
<feature type="binding site" evidence="1">
    <location>
        <begin position="156"/>
        <end position="158"/>
    </location>
    <ligand>
        <name>FMN</name>
        <dbReference type="ChEBI" id="CHEBI:58210"/>
    </ligand>
</feature>
<feature type="binding site" evidence="2">
    <location>
        <position position="158"/>
    </location>
    <ligand>
        <name>glyoxylate</name>
        <dbReference type="ChEBI" id="CHEBI:36655"/>
    </ligand>
</feature>
<feature type="binding site" evidence="1">
    <location>
        <position position="184"/>
    </location>
    <ligand>
        <name>FMN</name>
        <dbReference type="ChEBI" id="CHEBI:58210"/>
    </ligand>
</feature>
<feature type="binding site" evidence="2">
    <location>
        <position position="193"/>
    </location>
    <ligand>
        <name>glyoxylate</name>
        <dbReference type="ChEBI" id="CHEBI:36655"/>
    </ligand>
</feature>
<feature type="binding site" evidence="1">
    <location>
        <position position="255"/>
    </location>
    <ligand>
        <name>FMN</name>
        <dbReference type="ChEBI" id="CHEBI:58210"/>
    </ligand>
</feature>
<feature type="binding site" evidence="1">
    <location>
        <position position="277"/>
    </location>
    <ligand>
        <name>FMN</name>
        <dbReference type="ChEBI" id="CHEBI:58210"/>
    </ligand>
</feature>
<feature type="binding site" evidence="2">
    <location>
        <position position="279"/>
    </location>
    <ligand>
        <name>glyoxylate</name>
        <dbReference type="ChEBI" id="CHEBI:36655"/>
    </ligand>
</feature>
<feature type="binding site" evidence="2">
    <location>
        <position position="282"/>
    </location>
    <ligand>
        <name>glyoxylate</name>
        <dbReference type="ChEBI" id="CHEBI:36655"/>
    </ligand>
</feature>
<feature type="binding site" evidence="1">
    <location>
        <begin position="310"/>
        <end position="314"/>
    </location>
    <ligand>
        <name>FMN</name>
        <dbReference type="ChEBI" id="CHEBI:58210"/>
    </ligand>
</feature>
<feature type="binding site" evidence="1">
    <location>
        <begin position="333"/>
        <end position="334"/>
    </location>
    <ligand>
        <name>FMN</name>
        <dbReference type="ChEBI" id="CHEBI:58210"/>
    </ligand>
</feature>